<protein>
    <recommendedName>
        <fullName evidence="1">Protein CLP1 homolog</fullName>
    </recommendedName>
    <alternativeName>
        <fullName>Crowded by cid</fullName>
    </alternativeName>
</protein>
<reference key="1">
    <citation type="journal article" date="2000" name="Science">
        <title>The genome sequence of Drosophila melanogaster.</title>
        <authorList>
            <person name="Adams M.D."/>
            <person name="Celniker S.E."/>
            <person name="Holt R.A."/>
            <person name="Evans C.A."/>
            <person name="Gocayne J.D."/>
            <person name="Amanatides P.G."/>
            <person name="Scherer S.E."/>
            <person name="Li P.W."/>
            <person name="Hoskins R.A."/>
            <person name="Galle R.F."/>
            <person name="George R.A."/>
            <person name="Lewis S.E."/>
            <person name="Richards S."/>
            <person name="Ashburner M."/>
            <person name="Henderson S.N."/>
            <person name="Sutton G.G."/>
            <person name="Wortman J.R."/>
            <person name="Yandell M.D."/>
            <person name="Zhang Q."/>
            <person name="Chen L.X."/>
            <person name="Brandon R.C."/>
            <person name="Rogers Y.-H.C."/>
            <person name="Blazej R.G."/>
            <person name="Champe M."/>
            <person name="Pfeiffer B.D."/>
            <person name="Wan K.H."/>
            <person name="Doyle C."/>
            <person name="Baxter E.G."/>
            <person name="Helt G."/>
            <person name="Nelson C.R."/>
            <person name="Miklos G.L.G."/>
            <person name="Abril J.F."/>
            <person name="Agbayani A."/>
            <person name="An H.-J."/>
            <person name="Andrews-Pfannkoch C."/>
            <person name="Baldwin D."/>
            <person name="Ballew R.M."/>
            <person name="Basu A."/>
            <person name="Baxendale J."/>
            <person name="Bayraktaroglu L."/>
            <person name="Beasley E.M."/>
            <person name="Beeson K.Y."/>
            <person name="Benos P.V."/>
            <person name="Berman B.P."/>
            <person name="Bhandari D."/>
            <person name="Bolshakov S."/>
            <person name="Borkova D."/>
            <person name="Botchan M.R."/>
            <person name="Bouck J."/>
            <person name="Brokstein P."/>
            <person name="Brottier P."/>
            <person name="Burtis K.C."/>
            <person name="Busam D.A."/>
            <person name="Butler H."/>
            <person name="Cadieu E."/>
            <person name="Center A."/>
            <person name="Chandra I."/>
            <person name="Cherry J.M."/>
            <person name="Cawley S."/>
            <person name="Dahlke C."/>
            <person name="Davenport L.B."/>
            <person name="Davies P."/>
            <person name="de Pablos B."/>
            <person name="Delcher A."/>
            <person name="Deng Z."/>
            <person name="Mays A.D."/>
            <person name="Dew I."/>
            <person name="Dietz S.M."/>
            <person name="Dodson K."/>
            <person name="Doup L.E."/>
            <person name="Downes M."/>
            <person name="Dugan-Rocha S."/>
            <person name="Dunkov B.C."/>
            <person name="Dunn P."/>
            <person name="Durbin K.J."/>
            <person name="Evangelista C.C."/>
            <person name="Ferraz C."/>
            <person name="Ferriera S."/>
            <person name="Fleischmann W."/>
            <person name="Fosler C."/>
            <person name="Gabrielian A.E."/>
            <person name="Garg N.S."/>
            <person name="Gelbart W.M."/>
            <person name="Glasser K."/>
            <person name="Glodek A."/>
            <person name="Gong F."/>
            <person name="Gorrell J.H."/>
            <person name="Gu Z."/>
            <person name="Guan P."/>
            <person name="Harris M."/>
            <person name="Harris N.L."/>
            <person name="Harvey D.A."/>
            <person name="Heiman T.J."/>
            <person name="Hernandez J.R."/>
            <person name="Houck J."/>
            <person name="Hostin D."/>
            <person name="Houston K.A."/>
            <person name="Howland T.J."/>
            <person name="Wei M.-H."/>
            <person name="Ibegwam C."/>
            <person name="Jalali M."/>
            <person name="Kalush F."/>
            <person name="Karpen G.H."/>
            <person name="Ke Z."/>
            <person name="Kennison J.A."/>
            <person name="Ketchum K.A."/>
            <person name="Kimmel B.E."/>
            <person name="Kodira C.D."/>
            <person name="Kraft C.L."/>
            <person name="Kravitz S."/>
            <person name="Kulp D."/>
            <person name="Lai Z."/>
            <person name="Lasko P."/>
            <person name="Lei Y."/>
            <person name="Levitsky A.A."/>
            <person name="Li J.H."/>
            <person name="Li Z."/>
            <person name="Liang Y."/>
            <person name="Lin X."/>
            <person name="Liu X."/>
            <person name="Mattei B."/>
            <person name="McIntosh T.C."/>
            <person name="McLeod M.P."/>
            <person name="McPherson D."/>
            <person name="Merkulov G."/>
            <person name="Milshina N.V."/>
            <person name="Mobarry C."/>
            <person name="Morris J."/>
            <person name="Moshrefi A."/>
            <person name="Mount S.M."/>
            <person name="Moy M."/>
            <person name="Murphy B."/>
            <person name="Murphy L."/>
            <person name="Muzny D.M."/>
            <person name="Nelson D.L."/>
            <person name="Nelson D.R."/>
            <person name="Nelson K.A."/>
            <person name="Nixon K."/>
            <person name="Nusskern D.R."/>
            <person name="Pacleb J.M."/>
            <person name="Palazzolo M."/>
            <person name="Pittman G.S."/>
            <person name="Pan S."/>
            <person name="Pollard J."/>
            <person name="Puri V."/>
            <person name="Reese M.G."/>
            <person name="Reinert K."/>
            <person name="Remington K."/>
            <person name="Saunders R.D.C."/>
            <person name="Scheeler F."/>
            <person name="Shen H."/>
            <person name="Shue B.C."/>
            <person name="Siden-Kiamos I."/>
            <person name="Simpson M."/>
            <person name="Skupski M.P."/>
            <person name="Smith T.J."/>
            <person name="Spier E."/>
            <person name="Spradling A.C."/>
            <person name="Stapleton M."/>
            <person name="Strong R."/>
            <person name="Sun E."/>
            <person name="Svirskas R."/>
            <person name="Tector C."/>
            <person name="Turner R."/>
            <person name="Venter E."/>
            <person name="Wang A.H."/>
            <person name="Wang X."/>
            <person name="Wang Z.-Y."/>
            <person name="Wassarman D.A."/>
            <person name="Weinstock G.M."/>
            <person name="Weissenbach J."/>
            <person name="Williams S.M."/>
            <person name="Woodage T."/>
            <person name="Worley K.C."/>
            <person name="Wu D."/>
            <person name="Yang S."/>
            <person name="Yao Q.A."/>
            <person name="Ye J."/>
            <person name="Yeh R.-F."/>
            <person name="Zaveri J.S."/>
            <person name="Zhan M."/>
            <person name="Zhang G."/>
            <person name="Zhao Q."/>
            <person name="Zheng L."/>
            <person name="Zheng X.H."/>
            <person name="Zhong F.N."/>
            <person name="Zhong W."/>
            <person name="Zhou X."/>
            <person name="Zhu S.C."/>
            <person name="Zhu X."/>
            <person name="Smith H.O."/>
            <person name="Gibbs R.A."/>
            <person name="Myers E.W."/>
            <person name="Rubin G.M."/>
            <person name="Venter J.C."/>
        </authorList>
    </citation>
    <scope>NUCLEOTIDE SEQUENCE [LARGE SCALE GENOMIC DNA]</scope>
    <source>
        <strain>Berkeley</strain>
    </source>
</reference>
<reference key="2">
    <citation type="journal article" date="2002" name="Genome Biol.">
        <title>Annotation of the Drosophila melanogaster euchromatic genome: a systematic review.</title>
        <authorList>
            <person name="Misra S."/>
            <person name="Crosby M.A."/>
            <person name="Mungall C.J."/>
            <person name="Matthews B.B."/>
            <person name="Campbell K.S."/>
            <person name="Hradecky P."/>
            <person name="Huang Y."/>
            <person name="Kaminker J.S."/>
            <person name="Millburn G.H."/>
            <person name="Prochnik S.E."/>
            <person name="Smith C.D."/>
            <person name="Tupy J.L."/>
            <person name="Whitfield E.J."/>
            <person name="Bayraktaroglu L."/>
            <person name="Berman B.P."/>
            <person name="Bettencourt B.R."/>
            <person name="Celniker S.E."/>
            <person name="de Grey A.D.N.J."/>
            <person name="Drysdale R.A."/>
            <person name="Harris N.L."/>
            <person name="Richter J."/>
            <person name="Russo S."/>
            <person name="Schroeder A.J."/>
            <person name="Shu S.Q."/>
            <person name="Stapleton M."/>
            <person name="Yamada C."/>
            <person name="Ashburner M."/>
            <person name="Gelbart W.M."/>
            <person name="Rubin G.M."/>
            <person name="Lewis S.E."/>
        </authorList>
    </citation>
    <scope>GENOME REANNOTATION</scope>
    <source>
        <strain>Berkeley</strain>
    </source>
</reference>
<reference key="3">
    <citation type="journal article" date="2002" name="Genome Biol.">
        <title>A Drosophila full-length cDNA resource.</title>
        <authorList>
            <person name="Stapleton M."/>
            <person name="Carlson J.W."/>
            <person name="Brokstein P."/>
            <person name="Yu C."/>
            <person name="Champe M."/>
            <person name="George R.A."/>
            <person name="Guarin H."/>
            <person name="Kronmiller B."/>
            <person name="Pacleb J.M."/>
            <person name="Park S."/>
            <person name="Wan K.H."/>
            <person name="Rubin G.M."/>
            <person name="Celniker S.E."/>
        </authorList>
    </citation>
    <scope>NUCLEOTIDE SEQUENCE [LARGE SCALE MRNA]</scope>
    <source>
        <strain>Berkeley</strain>
    </source>
</reference>
<name>CLP1_DROME</name>
<organism>
    <name type="scientific">Drosophila melanogaster</name>
    <name type="common">Fruit fly</name>
    <dbReference type="NCBI Taxonomy" id="7227"/>
    <lineage>
        <taxon>Eukaryota</taxon>
        <taxon>Metazoa</taxon>
        <taxon>Ecdysozoa</taxon>
        <taxon>Arthropoda</taxon>
        <taxon>Hexapoda</taxon>
        <taxon>Insecta</taxon>
        <taxon>Pterygota</taxon>
        <taxon>Neoptera</taxon>
        <taxon>Endopterygota</taxon>
        <taxon>Diptera</taxon>
        <taxon>Brachycera</taxon>
        <taxon>Muscomorpha</taxon>
        <taxon>Ephydroidea</taxon>
        <taxon>Drosophilidae</taxon>
        <taxon>Drosophila</taxon>
        <taxon>Sophophora</taxon>
    </lineage>
</organism>
<proteinExistence type="evidence at transcript level"/>
<accession>Q7K284</accession>
<sequence length="423" mass="46791">MSEDQGKDYTLESDSELRFEIEQKDAKVLVSLVSGFAELFGTELVKKKQYEFGVGAKVAIFTYQGCVLHVSGKMDVCYISKETPMVQYVNCHAALEQFRMEAEEKDRYGPVAMVVGPMDVGKSTLCRILLNYAVRVGRRPLYADLDVGQGSIAISGSVATILIERPANVEEGFAKTAPLVYHFGHKSPSGNSVLYNAVVSKMAEVTLQSLNSNKRTKSSGIIINTCGWVKGSGYAHLLHAAKAYGACAIFVLDQERLYNELLRDVPKGVHVVLLPKSGGVVERSKELRHEARDQRIKEYFYGNTRAPFYPFSFEVKFQDLRLYKIGAPPLPDSCMPIGMKAEDNKTKVVAVTPTPALIHHVLALSFAESVEDDVIGTNVAGFCCVTEVDMERQAVMLLSPQPRPLPPNALLLWSELQFMDNHT</sequence>
<gene>
    <name type="primary">cbc</name>
    <name type="ORF">CG5970</name>
</gene>
<dbReference type="EMBL" id="AE013599">
    <property type="protein sequence ID" value="AAF58372.1"/>
    <property type="molecule type" value="Genomic_DNA"/>
</dbReference>
<dbReference type="EMBL" id="AY061187">
    <property type="protein sequence ID" value="AAL28735.1"/>
    <property type="molecule type" value="mRNA"/>
</dbReference>
<dbReference type="RefSeq" id="NP_610876.1">
    <property type="nucleotide sequence ID" value="NM_137032.4"/>
</dbReference>
<dbReference type="SMR" id="Q7K284"/>
<dbReference type="BioGRID" id="62253">
    <property type="interactions" value="1"/>
</dbReference>
<dbReference type="FunCoup" id="Q7K284">
    <property type="interactions" value="1584"/>
</dbReference>
<dbReference type="IntAct" id="Q7K284">
    <property type="interactions" value="1"/>
</dbReference>
<dbReference type="STRING" id="7227.FBpp0086820"/>
<dbReference type="GlyGen" id="Q7K284">
    <property type="glycosylation" value="2 sites"/>
</dbReference>
<dbReference type="PaxDb" id="7227-FBpp0086820"/>
<dbReference type="DNASU" id="36494"/>
<dbReference type="EnsemblMetazoa" id="FBtr0087701">
    <property type="protein sequence ID" value="FBpp0086820"/>
    <property type="gene ID" value="FBgn0033842"/>
</dbReference>
<dbReference type="GeneID" id="36494"/>
<dbReference type="KEGG" id="dme:Dmel_CG5970"/>
<dbReference type="UCSC" id="CG5970-RA">
    <property type="organism name" value="d. melanogaster"/>
</dbReference>
<dbReference type="AGR" id="FB:FBgn0033842"/>
<dbReference type="CTD" id="36494"/>
<dbReference type="FlyBase" id="FBgn0033842">
    <property type="gene designation" value="cbc"/>
</dbReference>
<dbReference type="VEuPathDB" id="VectorBase:FBgn0033842"/>
<dbReference type="eggNOG" id="KOG2749">
    <property type="taxonomic scope" value="Eukaryota"/>
</dbReference>
<dbReference type="GeneTree" id="ENSGT00940000153668"/>
<dbReference type="HOGENOM" id="CLU_018195_1_0_1"/>
<dbReference type="InParanoid" id="Q7K284"/>
<dbReference type="OMA" id="VQYVNCH"/>
<dbReference type="OrthoDB" id="258143at2759"/>
<dbReference type="PhylomeDB" id="Q7K284"/>
<dbReference type="Reactome" id="R-DME-72187">
    <property type="pathway name" value="mRNA 3'-end processing"/>
</dbReference>
<dbReference type="Reactome" id="R-DME-72203">
    <property type="pathway name" value="Processing of Capped Intron-Containing Pre-mRNA"/>
</dbReference>
<dbReference type="Reactome" id="R-DME-73856">
    <property type="pathway name" value="RNA Polymerase II Transcription Termination"/>
</dbReference>
<dbReference type="Reactome" id="R-DME-77595">
    <property type="pathway name" value="Processing of Intronless Pre-mRNAs"/>
</dbReference>
<dbReference type="BioGRID-ORCS" id="36494">
    <property type="hits" value="1 hit in 1 CRISPR screen"/>
</dbReference>
<dbReference type="GenomeRNAi" id="36494"/>
<dbReference type="PRO" id="PR:Q7K284"/>
<dbReference type="Proteomes" id="UP000000803">
    <property type="component" value="Chromosome 2R"/>
</dbReference>
<dbReference type="Bgee" id="FBgn0033842">
    <property type="expression patterns" value="Expressed in T neuron T5c (Drosophila) in embryonic/larval optic lobe (Drosophila) and 58 other cell types or tissues"/>
</dbReference>
<dbReference type="GO" id="GO:0005849">
    <property type="term" value="C:mRNA cleavage factor complex"/>
    <property type="evidence" value="ECO:0007669"/>
    <property type="project" value="InterPro"/>
</dbReference>
<dbReference type="GO" id="GO:0005634">
    <property type="term" value="C:nucleus"/>
    <property type="evidence" value="ECO:0000318"/>
    <property type="project" value="GO_Central"/>
</dbReference>
<dbReference type="GO" id="GO:0000214">
    <property type="term" value="C:tRNA-intron endonuclease complex"/>
    <property type="evidence" value="ECO:0000250"/>
    <property type="project" value="UniProtKB"/>
</dbReference>
<dbReference type="GO" id="GO:0005524">
    <property type="term" value="F:ATP binding"/>
    <property type="evidence" value="ECO:0007669"/>
    <property type="project" value="UniProtKB-UniRule"/>
</dbReference>
<dbReference type="GO" id="GO:0046404">
    <property type="term" value="F:ATP-dependent polydeoxyribonucleotide 5'-hydroxyl-kinase activity"/>
    <property type="evidence" value="ECO:0000250"/>
    <property type="project" value="FlyBase"/>
</dbReference>
<dbReference type="GO" id="GO:0051736">
    <property type="term" value="F:ATP-dependent polyribonucleotide 5'-hydroxyl-kinase activity"/>
    <property type="evidence" value="ECO:0000250"/>
    <property type="project" value="FlyBase"/>
</dbReference>
<dbReference type="GO" id="GO:0051731">
    <property type="term" value="F:polynucleotide 5'-hydroxyl-kinase activity"/>
    <property type="evidence" value="ECO:0000318"/>
    <property type="project" value="GO_Central"/>
</dbReference>
<dbReference type="GO" id="GO:0031124">
    <property type="term" value="P:mRNA 3'-end processing"/>
    <property type="evidence" value="ECO:0007669"/>
    <property type="project" value="UniProtKB-UniRule"/>
</dbReference>
<dbReference type="GO" id="GO:0006388">
    <property type="term" value="P:tRNA splicing, via endonucleolytic cleavage and ligation"/>
    <property type="evidence" value="ECO:0000250"/>
    <property type="project" value="UniProtKB"/>
</dbReference>
<dbReference type="CDD" id="cd01983">
    <property type="entry name" value="SIMIBI"/>
    <property type="match status" value="1"/>
</dbReference>
<dbReference type="FunFam" id="2.40.30.330:FF:000001">
    <property type="entry name" value="Protein CLP1 homolog"/>
    <property type="match status" value="1"/>
</dbReference>
<dbReference type="FunFam" id="3.40.50.300:FF:000454">
    <property type="entry name" value="Protein CLP1 homolog"/>
    <property type="match status" value="1"/>
</dbReference>
<dbReference type="FunFam" id="2.60.120.1030:FF:000001">
    <property type="entry name" value="Protein CLP1 homolog 5"/>
    <property type="match status" value="1"/>
</dbReference>
<dbReference type="Gene3D" id="2.60.120.1030">
    <property type="entry name" value="Clp1, DNA binding domain"/>
    <property type="match status" value="1"/>
</dbReference>
<dbReference type="Gene3D" id="3.40.50.300">
    <property type="entry name" value="P-loop containing nucleotide triphosphate hydrolases"/>
    <property type="match status" value="1"/>
</dbReference>
<dbReference type="Gene3D" id="2.40.30.330">
    <property type="entry name" value="Pre-mRNA cleavage complex subunit Clp1, C-terminal domain"/>
    <property type="match status" value="1"/>
</dbReference>
<dbReference type="HAMAP" id="MF_03035">
    <property type="entry name" value="Clp1"/>
    <property type="match status" value="1"/>
</dbReference>
<dbReference type="InterPro" id="IPR028606">
    <property type="entry name" value="Clp1"/>
</dbReference>
<dbReference type="InterPro" id="IPR045116">
    <property type="entry name" value="Clp1/Grc3"/>
</dbReference>
<dbReference type="InterPro" id="IPR010655">
    <property type="entry name" value="Clp1_C"/>
</dbReference>
<dbReference type="InterPro" id="IPR038238">
    <property type="entry name" value="Clp1_C_sf"/>
</dbReference>
<dbReference type="InterPro" id="IPR032324">
    <property type="entry name" value="Clp1_N"/>
</dbReference>
<dbReference type="InterPro" id="IPR038239">
    <property type="entry name" value="Clp1_N_sf"/>
</dbReference>
<dbReference type="InterPro" id="IPR032319">
    <property type="entry name" value="CLP1_P"/>
</dbReference>
<dbReference type="InterPro" id="IPR027417">
    <property type="entry name" value="P-loop_NTPase"/>
</dbReference>
<dbReference type="PANTHER" id="PTHR12755">
    <property type="entry name" value="CLEAVAGE/POLYADENYLATION FACTOR IA SUBUNIT CLP1P"/>
    <property type="match status" value="1"/>
</dbReference>
<dbReference type="PANTHER" id="PTHR12755:SF6">
    <property type="entry name" value="POLYRIBONUCLEOTIDE 5'-HYDROXYL-KINASE CLP1"/>
    <property type="match status" value="1"/>
</dbReference>
<dbReference type="Pfam" id="PF06807">
    <property type="entry name" value="Clp1"/>
    <property type="match status" value="1"/>
</dbReference>
<dbReference type="Pfam" id="PF16573">
    <property type="entry name" value="CLP1_N"/>
    <property type="match status" value="1"/>
</dbReference>
<dbReference type="Pfam" id="PF16575">
    <property type="entry name" value="CLP1_P"/>
    <property type="match status" value="1"/>
</dbReference>
<dbReference type="SUPFAM" id="SSF52540">
    <property type="entry name" value="P-loop containing nucleoside triphosphate hydrolases"/>
    <property type="match status" value="1"/>
</dbReference>
<feature type="chain" id="PRO_0000375180" description="Protein CLP1 homolog">
    <location>
        <begin position="1"/>
        <end position="423"/>
    </location>
</feature>
<feature type="binding site" evidence="1">
    <location>
        <position position="16"/>
    </location>
    <ligand>
        <name>ATP</name>
        <dbReference type="ChEBI" id="CHEBI:30616"/>
    </ligand>
</feature>
<feature type="binding site" evidence="1">
    <location>
        <position position="57"/>
    </location>
    <ligand>
        <name>ATP</name>
        <dbReference type="ChEBI" id="CHEBI:30616"/>
    </ligand>
</feature>
<feature type="binding site" evidence="1">
    <location>
        <begin position="119"/>
        <end position="124"/>
    </location>
    <ligand>
        <name>ATP</name>
        <dbReference type="ChEBI" id="CHEBI:30616"/>
    </ligand>
</feature>
<comment type="function">
    <text evidence="1">Required for endonucleolytic cleavage during polyadenylation-dependent pre-mRNA 3'-end formation.</text>
</comment>
<comment type="subcellular location">
    <subcellularLocation>
        <location evidence="1">Nucleus</location>
    </subcellularLocation>
</comment>
<comment type="similarity">
    <text evidence="1">Belongs to the Clp1 family. Clp1 subfamily.</text>
</comment>
<evidence type="ECO:0000255" key="1">
    <source>
        <dbReference type="HAMAP-Rule" id="MF_03035"/>
    </source>
</evidence>
<keyword id="KW-0067">ATP-binding</keyword>
<keyword id="KW-0507">mRNA processing</keyword>
<keyword id="KW-0547">Nucleotide-binding</keyword>
<keyword id="KW-0539">Nucleus</keyword>
<keyword id="KW-1185">Reference proteome</keyword>